<gene>
    <name evidence="1" type="primary">engB</name>
    <name type="ordered locus">Avin_02010</name>
</gene>
<proteinExistence type="inferred from homology"/>
<organism>
    <name type="scientific">Azotobacter vinelandii (strain DJ / ATCC BAA-1303)</name>
    <dbReference type="NCBI Taxonomy" id="322710"/>
    <lineage>
        <taxon>Bacteria</taxon>
        <taxon>Pseudomonadati</taxon>
        <taxon>Pseudomonadota</taxon>
        <taxon>Gammaproteobacteria</taxon>
        <taxon>Pseudomonadales</taxon>
        <taxon>Pseudomonadaceae</taxon>
        <taxon>Azotobacter</taxon>
    </lineage>
</organism>
<feature type="chain" id="PRO_1000205120" description="Probable GTP-binding protein EngB">
    <location>
        <begin position="1"/>
        <end position="216"/>
    </location>
</feature>
<feature type="domain" description="EngB-type G" evidence="1">
    <location>
        <begin position="30"/>
        <end position="204"/>
    </location>
</feature>
<feature type="binding site" evidence="1">
    <location>
        <begin position="38"/>
        <end position="45"/>
    </location>
    <ligand>
        <name>GTP</name>
        <dbReference type="ChEBI" id="CHEBI:37565"/>
    </ligand>
</feature>
<feature type="binding site" evidence="1">
    <location>
        <position position="45"/>
    </location>
    <ligand>
        <name>Mg(2+)</name>
        <dbReference type="ChEBI" id="CHEBI:18420"/>
    </ligand>
</feature>
<feature type="binding site" evidence="1">
    <location>
        <begin position="64"/>
        <end position="68"/>
    </location>
    <ligand>
        <name>GTP</name>
        <dbReference type="ChEBI" id="CHEBI:37565"/>
    </ligand>
</feature>
<feature type="binding site" evidence="1">
    <location>
        <position position="66"/>
    </location>
    <ligand>
        <name>Mg(2+)</name>
        <dbReference type="ChEBI" id="CHEBI:18420"/>
    </ligand>
</feature>
<feature type="binding site" evidence="1">
    <location>
        <begin position="82"/>
        <end position="85"/>
    </location>
    <ligand>
        <name>GTP</name>
        <dbReference type="ChEBI" id="CHEBI:37565"/>
    </ligand>
</feature>
<feature type="binding site" evidence="1">
    <location>
        <begin position="149"/>
        <end position="152"/>
    </location>
    <ligand>
        <name>GTP</name>
        <dbReference type="ChEBI" id="CHEBI:37565"/>
    </ligand>
</feature>
<feature type="binding site" evidence="1">
    <location>
        <begin position="182"/>
        <end position="185"/>
    </location>
    <ligand>
        <name>GTP</name>
        <dbReference type="ChEBI" id="CHEBI:37565"/>
    </ligand>
</feature>
<name>ENGB_AZOVD</name>
<dbReference type="EMBL" id="CP001157">
    <property type="protein sequence ID" value="ACO76462.1"/>
    <property type="molecule type" value="Genomic_DNA"/>
</dbReference>
<dbReference type="RefSeq" id="WP_012698890.1">
    <property type="nucleotide sequence ID" value="NC_012560.1"/>
</dbReference>
<dbReference type="SMR" id="C1DH55"/>
<dbReference type="STRING" id="322710.Avin_02010"/>
<dbReference type="EnsemblBacteria" id="ACO76462">
    <property type="protein sequence ID" value="ACO76462"/>
    <property type="gene ID" value="Avin_02010"/>
</dbReference>
<dbReference type="GeneID" id="88183668"/>
<dbReference type="KEGG" id="avn:Avin_02010"/>
<dbReference type="eggNOG" id="COG0218">
    <property type="taxonomic scope" value="Bacteria"/>
</dbReference>
<dbReference type="HOGENOM" id="CLU_033732_1_0_6"/>
<dbReference type="OrthoDB" id="9804921at2"/>
<dbReference type="Proteomes" id="UP000002424">
    <property type="component" value="Chromosome"/>
</dbReference>
<dbReference type="GO" id="GO:0005829">
    <property type="term" value="C:cytosol"/>
    <property type="evidence" value="ECO:0007669"/>
    <property type="project" value="TreeGrafter"/>
</dbReference>
<dbReference type="GO" id="GO:0005525">
    <property type="term" value="F:GTP binding"/>
    <property type="evidence" value="ECO:0007669"/>
    <property type="project" value="UniProtKB-UniRule"/>
</dbReference>
<dbReference type="GO" id="GO:0046872">
    <property type="term" value="F:metal ion binding"/>
    <property type="evidence" value="ECO:0007669"/>
    <property type="project" value="UniProtKB-KW"/>
</dbReference>
<dbReference type="GO" id="GO:0000917">
    <property type="term" value="P:division septum assembly"/>
    <property type="evidence" value="ECO:0007669"/>
    <property type="project" value="UniProtKB-KW"/>
</dbReference>
<dbReference type="CDD" id="cd01876">
    <property type="entry name" value="YihA_EngB"/>
    <property type="match status" value="1"/>
</dbReference>
<dbReference type="FunFam" id="3.40.50.300:FF:000098">
    <property type="entry name" value="Probable GTP-binding protein EngB"/>
    <property type="match status" value="1"/>
</dbReference>
<dbReference type="Gene3D" id="3.40.50.300">
    <property type="entry name" value="P-loop containing nucleotide triphosphate hydrolases"/>
    <property type="match status" value="1"/>
</dbReference>
<dbReference type="HAMAP" id="MF_00321">
    <property type="entry name" value="GTPase_EngB"/>
    <property type="match status" value="1"/>
</dbReference>
<dbReference type="InterPro" id="IPR030393">
    <property type="entry name" value="G_ENGB_dom"/>
</dbReference>
<dbReference type="InterPro" id="IPR006073">
    <property type="entry name" value="GTP-bd"/>
</dbReference>
<dbReference type="InterPro" id="IPR019987">
    <property type="entry name" value="GTP-bd_ribosome_bio_YsxC"/>
</dbReference>
<dbReference type="InterPro" id="IPR027417">
    <property type="entry name" value="P-loop_NTPase"/>
</dbReference>
<dbReference type="NCBIfam" id="TIGR03598">
    <property type="entry name" value="GTPase_YsxC"/>
    <property type="match status" value="1"/>
</dbReference>
<dbReference type="PANTHER" id="PTHR11649:SF13">
    <property type="entry name" value="ENGB-TYPE G DOMAIN-CONTAINING PROTEIN"/>
    <property type="match status" value="1"/>
</dbReference>
<dbReference type="PANTHER" id="PTHR11649">
    <property type="entry name" value="MSS1/TRME-RELATED GTP-BINDING PROTEIN"/>
    <property type="match status" value="1"/>
</dbReference>
<dbReference type="Pfam" id="PF01926">
    <property type="entry name" value="MMR_HSR1"/>
    <property type="match status" value="1"/>
</dbReference>
<dbReference type="SUPFAM" id="SSF52540">
    <property type="entry name" value="P-loop containing nucleoside triphosphate hydrolases"/>
    <property type="match status" value="1"/>
</dbReference>
<dbReference type="PROSITE" id="PS51706">
    <property type="entry name" value="G_ENGB"/>
    <property type="match status" value="1"/>
</dbReference>
<keyword id="KW-0131">Cell cycle</keyword>
<keyword id="KW-0132">Cell division</keyword>
<keyword id="KW-0342">GTP-binding</keyword>
<keyword id="KW-0460">Magnesium</keyword>
<keyword id="KW-0479">Metal-binding</keyword>
<keyword id="KW-0547">Nucleotide-binding</keyword>
<keyword id="KW-0717">Septation</keyword>
<protein>
    <recommendedName>
        <fullName evidence="1">Probable GTP-binding protein EngB</fullName>
    </recommendedName>
</protein>
<comment type="function">
    <text evidence="1">Necessary for normal cell division and for the maintenance of normal septation.</text>
</comment>
<comment type="cofactor">
    <cofactor evidence="1">
        <name>Mg(2+)</name>
        <dbReference type="ChEBI" id="CHEBI:18420"/>
    </cofactor>
</comment>
<comment type="similarity">
    <text evidence="1">Belongs to the TRAFAC class TrmE-Era-EngA-EngB-Septin-like GTPase superfamily. EngB GTPase family.</text>
</comment>
<sequence length="216" mass="23584">MSFKNPVLGLCQQAAFMLSAARVDQCPADDGLEVAFAGRSNAGKSSALNTLTHANLARTSKTPGRTQLLNFFRLDDRRRLVDLPGYGYAKVPIPLKQHWQHHLEAYLGSRRSLAGVVLLMDIRHPLTDFDRMMLDWAGASGMPMHILLTKADKLAFGAAKNALLKVRREIHKGWGEGMSVQLFSAPKRQGVEEAHDVLARWLGLAGDDGGEADAGA</sequence>
<evidence type="ECO:0000255" key="1">
    <source>
        <dbReference type="HAMAP-Rule" id="MF_00321"/>
    </source>
</evidence>
<reference key="1">
    <citation type="journal article" date="2009" name="J. Bacteriol.">
        <title>Genome sequence of Azotobacter vinelandii, an obligate aerobe specialized to support diverse anaerobic metabolic processes.</title>
        <authorList>
            <person name="Setubal J.C."/>
            <person name="Dos Santos P."/>
            <person name="Goldman B.S."/>
            <person name="Ertesvaag H."/>
            <person name="Espin G."/>
            <person name="Rubio L.M."/>
            <person name="Valla S."/>
            <person name="Almeida N.F."/>
            <person name="Balasubramanian D."/>
            <person name="Cromes L."/>
            <person name="Curatti L."/>
            <person name="Du Z."/>
            <person name="Godsy E."/>
            <person name="Goodner B."/>
            <person name="Hellner-Burris K."/>
            <person name="Hernandez J.A."/>
            <person name="Houmiel K."/>
            <person name="Imperial J."/>
            <person name="Kennedy C."/>
            <person name="Larson T.J."/>
            <person name="Latreille P."/>
            <person name="Ligon L.S."/>
            <person name="Lu J."/>
            <person name="Maerk M."/>
            <person name="Miller N.M."/>
            <person name="Norton S."/>
            <person name="O'Carroll I.P."/>
            <person name="Paulsen I."/>
            <person name="Raulfs E.C."/>
            <person name="Roemer R."/>
            <person name="Rosser J."/>
            <person name="Segura D."/>
            <person name="Slater S."/>
            <person name="Stricklin S.L."/>
            <person name="Studholme D.J."/>
            <person name="Sun J."/>
            <person name="Viana C.J."/>
            <person name="Wallin E."/>
            <person name="Wang B."/>
            <person name="Wheeler C."/>
            <person name="Zhu H."/>
            <person name="Dean D.R."/>
            <person name="Dixon R."/>
            <person name="Wood D."/>
        </authorList>
    </citation>
    <scope>NUCLEOTIDE SEQUENCE [LARGE SCALE GENOMIC DNA]</scope>
    <source>
        <strain>DJ / ATCC BAA-1303</strain>
    </source>
</reference>
<accession>C1DH55</accession>